<keyword id="KW-0963">Cytoplasm</keyword>
<keyword id="KW-0238">DNA-binding</keyword>
<keyword id="KW-0804">Transcription</keyword>
<keyword id="KW-0805">Transcription regulation</keyword>
<name>Y3983_RHIJ3</name>
<dbReference type="EMBL" id="AM236080">
    <property type="protein sequence ID" value="CAK09473.1"/>
    <property type="molecule type" value="Genomic_DNA"/>
</dbReference>
<dbReference type="RefSeq" id="WP_011653412.1">
    <property type="nucleotide sequence ID" value="NC_008380.1"/>
</dbReference>
<dbReference type="SMR" id="Q1MC59"/>
<dbReference type="EnsemblBacteria" id="CAK09473">
    <property type="protein sequence ID" value="CAK09473"/>
    <property type="gene ID" value="RL3983"/>
</dbReference>
<dbReference type="KEGG" id="rle:RL3983"/>
<dbReference type="eggNOG" id="COG0217">
    <property type="taxonomic scope" value="Bacteria"/>
</dbReference>
<dbReference type="HOGENOM" id="CLU_062974_2_2_5"/>
<dbReference type="Proteomes" id="UP000006575">
    <property type="component" value="Chromosome"/>
</dbReference>
<dbReference type="GO" id="GO:0005829">
    <property type="term" value="C:cytosol"/>
    <property type="evidence" value="ECO:0007669"/>
    <property type="project" value="TreeGrafter"/>
</dbReference>
<dbReference type="GO" id="GO:0003677">
    <property type="term" value="F:DNA binding"/>
    <property type="evidence" value="ECO:0007669"/>
    <property type="project" value="UniProtKB-UniRule"/>
</dbReference>
<dbReference type="GO" id="GO:0006355">
    <property type="term" value="P:regulation of DNA-templated transcription"/>
    <property type="evidence" value="ECO:0007669"/>
    <property type="project" value="UniProtKB-UniRule"/>
</dbReference>
<dbReference type="FunFam" id="1.10.10.200:FF:000002">
    <property type="entry name" value="Probable transcriptional regulatory protein CLM62_37755"/>
    <property type="match status" value="1"/>
</dbReference>
<dbReference type="Gene3D" id="1.10.10.200">
    <property type="match status" value="1"/>
</dbReference>
<dbReference type="Gene3D" id="3.30.70.980">
    <property type="match status" value="2"/>
</dbReference>
<dbReference type="HAMAP" id="MF_00693">
    <property type="entry name" value="Transcrip_reg_TACO1"/>
    <property type="match status" value="1"/>
</dbReference>
<dbReference type="InterPro" id="IPR017856">
    <property type="entry name" value="Integrase-like_N"/>
</dbReference>
<dbReference type="InterPro" id="IPR048300">
    <property type="entry name" value="TACO1_YebC-like_2nd/3rd_dom"/>
</dbReference>
<dbReference type="InterPro" id="IPR049083">
    <property type="entry name" value="TACO1_YebC_N"/>
</dbReference>
<dbReference type="InterPro" id="IPR002876">
    <property type="entry name" value="Transcrip_reg_TACO1-like"/>
</dbReference>
<dbReference type="InterPro" id="IPR026564">
    <property type="entry name" value="Transcrip_reg_TACO1-like_dom3"/>
</dbReference>
<dbReference type="InterPro" id="IPR029072">
    <property type="entry name" value="YebC-like"/>
</dbReference>
<dbReference type="NCBIfam" id="NF001030">
    <property type="entry name" value="PRK00110.1"/>
    <property type="match status" value="1"/>
</dbReference>
<dbReference type="NCBIfam" id="NF009044">
    <property type="entry name" value="PRK12378.1"/>
    <property type="match status" value="1"/>
</dbReference>
<dbReference type="NCBIfam" id="TIGR01033">
    <property type="entry name" value="YebC/PmpR family DNA-binding transcriptional regulator"/>
    <property type="match status" value="1"/>
</dbReference>
<dbReference type="PANTHER" id="PTHR12532:SF6">
    <property type="entry name" value="TRANSCRIPTIONAL REGULATORY PROTEIN YEBC-RELATED"/>
    <property type="match status" value="1"/>
</dbReference>
<dbReference type="PANTHER" id="PTHR12532">
    <property type="entry name" value="TRANSLATIONAL ACTIVATOR OF CYTOCHROME C OXIDASE 1"/>
    <property type="match status" value="1"/>
</dbReference>
<dbReference type="Pfam" id="PF20772">
    <property type="entry name" value="TACO1_YebC_N"/>
    <property type="match status" value="1"/>
</dbReference>
<dbReference type="Pfam" id="PF01709">
    <property type="entry name" value="Transcrip_reg"/>
    <property type="match status" value="1"/>
</dbReference>
<dbReference type="SUPFAM" id="SSF75625">
    <property type="entry name" value="YebC-like"/>
    <property type="match status" value="1"/>
</dbReference>
<evidence type="ECO:0000255" key="1">
    <source>
        <dbReference type="HAMAP-Rule" id="MF_00693"/>
    </source>
</evidence>
<proteinExistence type="inferred from homology"/>
<sequence length="248" mass="26691">MAGHSQFKNIMHRKGRQDAVRSKMFSKLAREITVAAKAGLPDPTMNARLRLAIQNAKAQSMPKDNIDRAIKKAAGADGENYDEVRYEGYGPGGTAIIVEALTDNRNRTASNVRSSFTKAGGALGETGSVSFSFDHVGEITYKLSVGDGDKVMEAAIEAGADDVESDEDGHYITCAFEALGEVAKALESSLGEAETVKAVWRAQNNVPVDEEKAQSLLKLIDSLEDDDDVQNVYSNFEVSEEVLAKLSA</sequence>
<reference key="1">
    <citation type="journal article" date="2006" name="Genome Biol.">
        <title>The genome of Rhizobium leguminosarum has recognizable core and accessory components.</title>
        <authorList>
            <person name="Young J.P.W."/>
            <person name="Crossman L.C."/>
            <person name="Johnston A.W.B."/>
            <person name="Thomson N.R."/>
            <person name="Ghazoui Z.F."/>
            <person name="Hull K.H."/>
            <person name="Wexler M."/>
            <person name="Curson A.R.J."/>
            <person name="Todd J.D."/>
            <person name="Poole P.S."/>
            <person name="Mauchline T.H."/>
            <person name="East A.K."/>
            <person name="Quail M.A."/>
            <person name="Churcher C."/>
            <person name="Arrowsmith C."/>
            <person name="Cherevach I."/>
            <person name="Chillingworth T."/>
            <person name="Clarke K."/>
            <person name="Cronin A."/>
            <person name="Davis P."/>
            <person name="Fraser A."/>
            <person name="Hance Z."/>
            <person name="Hauser H."/>
            <person name="Jagels K."/>
            <person name="Moule S."/>
            <person name="Mungall K."/>
            <person name="Norbertczak H."/>
            <person name="Rabbinowitsch E."/>
            <person name="Sanders M."/>
            <person name="Simmonds M."/>
            <person name="Whitehead S."/>
            <person name="Parkhill J."/>
        </authorList>
    </citation>
    <scope>NUCLEOTIDE SEQUENCE [LARGE SCALE GENOMIC DNA]</scope>
    <source>
        <strain>DSM 114642 / LMG 32736 / 3841</strain>
    </source>
</reference>
<organism>
    <name type="scientific">Rhizobium johnstonii (strain DSM 114642 / LMG 32736 / 3841)</name>
    <name type="common">Rhizobium leguminosarum bv. viciae</name>
    <dbReference type="NCBI Taxonomy" id="216596"/>
    <lineage>
        <taxon>Bacteria</taxon>
        <taxon>Pseudomonadati</taxon>
        <taxon>Pseudomonadota</taxon>
        <taxon>Alphaproteobacteria</taxon>
        <taxon>Hyphomicrobiales</taxon>
        <taxon>Rhizobiaceae</taxon>
        <taxon>Rhizobium/Agrobacterium group</taxon>
        <taxon>Rhizobium</taxon>
        <taxon>Rhizobium johnstonii</taxon>
    </lineage>
</organism>
<accession>Q1MC59</accession>
<comment type="subcellular location">
    <subcellularLocation>
        <location evidence="1">Cytoplasm</location>
    </subcellularLocation>
</comment>
<comment type="similarity">
    <text evidence="1">Belongs to the TACO1 family.</text>
</comment>
<protein>
    <recommendedName>
        <fullName evidence="1">Probable transcriptional regulatory protein RL3983</fullName>
    </recommendedName>
</protein>
<feature type="chain" id="PRO_0000257113" description="Probable transcriptional regulatory protein RL3983">
    <location>
        <begin position="1"/>
        <end position="248"/>
    </location>
</feature>
<gene>
    <name type="ordered locus">RL3983</name>
</gene>